<proteinExistence type="evidence at protein level"/>
<comment type="function">
    <text evidence="1">Catalyzes the attachment of tryptophan to tRNA(Trp) in a two-step reaction: tryptophan is first activated by ATP to form Trp-AMP and then transferred to the acceptor end of the tRNA(Trp). Could also possess an angiostatic activity.</text>
</comment>
<comment type="catalytic activity">
    <reaction evidence="1">
        <text>tRNA(Trp) + L-tryptophan + ATP = L-tryptophyl-tRNA(Trp) + AMP + diphosphate + H(+)</text>
        <dbReference type="Rhea" id="RHEA:24080"/>
        <dbReference type="Rhea" id="RHEA-COMP:9671"/>
        <dbReference type="Rhea" id="RHEA-COMP:9705"/>
        <dbReference type="ChEBI" id="CHEBI:15378"/>
        <dbReference type="ChEBI" id="CHEBI:30616"/>
        <dbReference type="ChEBI" id="CHEBI:33019"/>
        <dbReference type="ChEBI" id="CHEBI:57912"/>
        <dbReference type="ChEBI" id="CHEBI:78442"/>
        <dbReference type="ChEBI" id="CHEBI:78535"/>
        <dbReference type="ChEBI" id="CHEBI:456215"/>
        <dbReference type="EC" id="6.1.1.2"/>
    </reaction>
    <physiologicalReaction direction="left-to-right" evidence="1">
        <dbReference type="Rhea" id="RHEA:24081"/>
    </physiologicalReaction>
</comment>
<comment type="subunit">
    <text evidence="1">Homodimer (By similarity). Interacts with oxidized form of GAPDH (By similarity).</text>
</comment>
<comment type="subcellular location">
    <subcellularLocation>
        <location evidence="1">Cytoplasm</location>
    </subcellularLocation>
</comment>
<comment type="alternative products">
    <event type="alternative splicing"/>
    <isoform>
        <id>P32921-1</id>
        <name>1</name>
        <name>Long</name>
        <sequence type="displayed"/>
    </isoform>
    <isoform>
        <id>P32921-2</id>
        <name>2</name>
        <name>Short</name>
        <sequence type="described" ref="VSP_006313"/>
    </isoform>
</comment>
<comment type="tissue specificity">
    <text evidence="3">Isoform 2 is widely expressed, isoform 1 is found only in embryonic stem cells.</text>
</comment>
<comment type="PTM">
    <text evidence="1">Proteolytic cleavage generates 2 forms; T1-TrpRS and T2-TrpRS.</text>
</comment>
<comment type="similarity">
    <text evidence="6">Belongs to the class-I aminoacyl-tRNA synthetase family.</text>
</comment>
<dbReference type="EC" id="6.1.1.2" evidence="1"/>
<dbReference type="EMBL" id="X69656">
    <property type="protein sequence ID" value="CAA49347.1"/>
    <property type="molecule type" value="Genomic_DNA"/>
</dbReference>
<dbReference type="EMBL" id="X69657">
    <property type="protein sequence ID" value="CAA49348.1"/>
    <property type="molecule type" value="Genomic_DNA"/>
</dbReference>
<dbReference type="EMBL" id="AK004541">
    <property type="protein sequence ID" value="BAB23357.1"/>
    <property type="molecule type" value="mRNA"/>
</dbReference>
<dbReference type="EMBL" id="BC003450">
    <property type="protein sequence ID" value="AAH03450.1"/>
    <property type="molecule type" value="mRNA"/>
</dbReference>
<dbReference type="EMBL" id="BC046232">
    <property type="protein sequence ID" value="AAH46232.1"/>
    <property type="molecule type" value="mRNA"/>
</dbReference>
<dbReference type="CCDS" id="CCDS26166.1">
    <molecule id="P32921-1"/>
</dbReference>
<dbReference type="CCDS" id="CCDS49171.1">
    <molecule id="P32921-2"/>
</dbReference>
<dbReference type="PIR" id="S50053">
    <property type="entry name" value="S50053"/>
</dbReference>
<dbReference type="RefSeq" id="NP_001157786.1">
    <molecule id="P32921-2"/>
    <property type="nucleotide sequence ID" value="NM_001164314.2"/>
</dbReference>
<dbReference type="RefSeq" id="NP_001157960.1">
    <molecule id="P32921-2"/>
    <property type="nucleotide sequence ID" value="NM_001164488.2"/>
</dbReference>
<dbReference type="RefSeq" id="NP_001398836.1">
    <molecule id="P32921-1"/>
    <property type="nucleotide sequence ID" value="NM_001411907.1"/>
</dbReference>
<dbReference type="RefSeq" id="NP_001398837.1">
    <molecule id="P32921-1"/>
    <property type="nucleotide sequence ID" value="NM_001411908.1"/>
</dbReference>
<dbReference type="RefSeq" id="NP_001398838.1">
    <molecule id="P32921-1"/>
    <property type="nucleotide sequence ID" value="NM_001411909.1"/>
</dbReference>
<dbReference type="RefSeq" id="NP_035840.3">
    <molecule id="P32921-1"/>
    <property type="nucleotide sequence ID" value="NM_011710.3"/>
</dbReference>
<dbReference type="RefSeq" id="XP_006515882.1">
    <molecule id="P32921-1"/>
    <property type="nucleotide sequence ID" value="XM_006515819.3"/>
</dbReference>
<dbReference type="SMR" id="P32921"/>
<dbReference type="BioGRID" id="204543">
    <property type="interactions" value="28"/>
</dbReference>
<dbReference type="FunCoup" id="P32921">
    <property type="interactions" value="3813"/>
</dbReference>
<dbReference type="STRING" id="10090.ENSMUSP00000124625"/>
<dbReference type="GlyGen" id="P32921">
    <property type="glycosylation" value="1 site, 1 O-linked glycan (1 site)"/>
</dbReference>
<dbReference type="iPTMnet" id="P32921"/>
<dbReference type="PhosphoSitePlus" id="P32921"/>
<dbReference type="SwissPalm" id="P32921"/>
<dbReference type="jPOST" id="P32921"/>
<dbReference type="PaxDb" id="10090-ENSMUSP00000124625"/>
<dbReference type="PeptideAtlas" id="P32921"/>
<dbReference type="ProteomicsDB" id="262988">
    <molecule id="P32921-1"/>
</dbReference>
<dbReference type="ProteomicsDB" id="262989">
    <molecule id="P32921-2"/>
</dbReference>
<dbReference type="Pumba" id="P32921"/>
<dbReference type="Antibodypedia" id="27522">
    <property type="antibodies" value="279 antibodies from 31 providers"/>
</dbReference>
<dbReference type="DNASU" id="22375"/>
<dbReference type="Ensembl" id="ENSMUST00000109848.10">
    <molecule id="P32921-2"/>
    <property type="protein sequence ID" value="ENSMUSP00000105474.4"/>
    <property type="gene ID" value="ENSMUSG00000021266.17"/>
</dbReference>
<dbReference type="Ensembl" id="ENSMUST00000161154.2">
    <molecule id="P32921-1"/>
    <property type="protein sequence ID" value="ENSMUSP00000124625.2"/>
    <property type="gene ID" value="ENSMUSG00000021266.17"/>
</dbReference>
<dbReference type="Ensembl" id="ENSMUST00000161410.8">
    <molecule id="P32921-2"/>
    <property type="protein sequence ID" value="ENSMUSP00000125320.2"/>
    <property type="gene ID" value="ENSMUSG00000021266.17"/>
</dbReference>
<dbReference type="GeneID" id="22375"/>
<dbReference type="KEGG" id="mmu:22375"/>
<dbReference type="UCSC" id="uc007pag.2">
    <molecule id="P32921-1"/>
    <property type="organism name" value="mouse"/>
</dbReference>
<dbReference type="AGR" id="MGI:104630"/>
<dbReference type="CTD" id="7453"/>
<dbReference type="MGI" id="MGI:104630">
    <property type="gene designation" value="Wars1"/>
</dbReference>
<dbReference type="VEuPathDB" id="HostDB:ENSMUSG00000021266"/>
<dbReference type="eggNOG" id="KOG2145">
    <property type="taxonomic scope" value="Eukaryota"/>
</dbReference>
<dbReference type="GeneTree" id="ENSGT00940000153724"/>
<dbReference type="HOGENOM" id="CLU_032621_0_1_1"/>
<dbReference type="InParanoid" id="P32921"/>
<dbReference type="OMA" id="SIYHRFM"/>
<dbReference type="OrthoDB" id="10261385at2759"/>
<dbReference type="PhylomeDB" id="P32921"/>
<dbReference type="TreeFam" id="TF105669"/>
<dbReference type="BRENDA" id="6.1.1.2">
    <property type="organism ID" value="3474"/>
</dbReference>
<dbReference type="BioGRID-ORCS" id="22375">
    <property type="hits" value="24 hits in 82 CRISPR screens"/>
</dbReference>
<dbReference type="ChiTaRS" id="Wars">
    <property type="organism name" value="mouse"/>
</dbReference>
<dbReference type="PRO" id="PR:P32921"/>
<dbReference type="Proteomes" id="UP000000589">
    <property type="component" value="Chromosome 12"/>
</dbReference>
<dbReference type="RNAct" id="P32921">
    <property type="molecule type" value="protein"/>
</dbReference>
<dbReference type="Bgee" id="ENSMUSG00000021266">
    <property type="expression patterns" value="Expressed in gastrula and 256 other cell types or tissues"/>
</dbReference>
<dbReference type="ExpressionAtlas" id="P32921">
    <property type="expression patterns" value="baseline and differential"/>
</dbReference>
<dbReference type="GO" id="GO:0005829">
    <property type="term" value="C:cytosol"/>
    <property type="evidence" value="ECO:0007669"/>
    <property type="project" value="Ensembl"/>
</dbReference>
<dbReference type="GO" id="GO:0005634">
    <property type="term" value="C:nucleus"/>
    <property type="evidence" value="ECO:0007669"/>
    <property type="project" value="Ensembl"/>
</dbReference>
<dbReference type="GO" id="GO:0032991">
    <property type="term" value="C:protein-containing complex"/>
    <property type="evidence" value="ECO:0007669"/>
    <property type="project" value="Ensembl"/>
</dbReference>
<dbReference type="GO" id="GO:0005524">
    <property type="term" value="F:ATP binding"/>
    <property type="evidence" value="ECO:0007669"/>
    <property type="project" value="UniProtKB-KW"/>
</dbReference>
<dbReference type="GO" id="GO:0019210">
    <property type="term" value="F:kinase inhibitor activity"/>
    <property type="evidence" value="ECO:0007669"/>
    <property type="project" value="Ensembl"/>
</dbReference>
<dbReference type="GO" id="GO:0019904">
    <property type="term" value="F:protein domain specific binding"/>
    <property type="evidence" value="ECO:0007669"/>
    <property type="project" value="Ensembl"/>
</dbReference>
<dbReference type="GO" id="GO:0042803">
    <property type="term" value="F:protein homodimerization activity"/>
    <property type="evidence" value="ECO:0000250"/>
    <property type="project" value="UniProtKB"/>
</dbReference>
<dbReference type="GO" id="GO:0019901">
    <property type="term" value="F:protein kinase binding"/>
    <property type="evidence" value="ECO:0007669"/>
    <property type="project" value="Ensembl"/>
</dbReference>
<dbReference type="GO" id="GO:0004830">
    <property type="term" value="F:tryptophan-tRNA ligase activity"/>
    <property type="evidence" value="ECO:0000314"/>
    <property type="project" value="MGI"/>
</dbReference>
<dbReference type="GO" id="GO:0001525">
    <property type="term" value="P:angiogenesis"/>
    <property type="evidence" value="ECO:0007669"/>
    <property type="project" value="UniProtKB-KW"/>
</dbReference>
<dbReference type="GO" id="GO:0010628">
    <property type="term" value="P:positive regulation of gene expression"/>
    <property type="evidence" value="ECO:0007669"/>
    <property type="project" value="Ensembl"/>
</dbReference>
<dbReference type="GO" id="GO:0031334">
    <property type="term" value="P:positive regulation of protein-containing complex assembly"/>
    <property type="evidence" value="ECO:0007669"/>
    <property type="project" value="Ensembl"/>
</dbReference>
<dbReference type="GO" id="GO:0045765">
    <property type="term" value="P:regulation of angiogenesis"/>
    <property type="evidence" value="ECO:0007669"/>
    <property type="project" value="Ensembl"/>
</dbReference>
<dbReference type="GO" id="GO:0006436">
    <property type="term" value="P:tryptophanyl-tRNA aminoacylation"/>
    <property type="evidence" value="ECO:0000314"/>
    <property type="project" value="CAFA"/>
</dbReference>
<dbReference type="CDD" id="cd00806">
    <property type="entry name" value="TrpRS_core"/>
    <property type="match status" value="1"/>
</dbReference>
<dbReference type="CDD" id="cd00936">
    <property type="entry name" value="WEPRS_RNA"/>
    <property type="match status" value="1"/>
</dbReference>
<dbReference type="FunFam" id="1.10.287.10:FF:000006">
    <property type="entry name" value="Bifunctional glutamate/proline--tRNA ligase"/>
    <property type="match status" value="1"/>
</dbReference>
<dbReference type="FunFam" id="1.10.240.10:FF:000003">
    <property type="entry name" value="Tryptophan--tRNA ligase, cytoplasmic"/>
    <property type="match status" value="1"/>
</dbReference>
<dbReference type="FunFam" id="3.40.50.620:FF:000454">
    <property type="entry name" value="Tryptophan--tRNA ligase, cytoplasmic"/>
    <property type="match status" value="1"/>
</dbReference>
<dbReference type="Gene3D" id="3.40.50.620">
    <property type="entry name" value="HUPs"/>
    <property type="match status" value="1"/>
</dbReference>
<dbReference type="Gene3D" id="1.10.287.10">
    <property type="entry name" value="S15/NS1, RNA-binding"/>
    <property type="match status" value="1"/>
</dbReference>
<dbReference type="Gene3D" id="1.10.240.10">
    <property type="entry name" value="Tyrosyl-Transfer RNA Synthetase"/>
    <property type="match status" value="1"/>
</dbReference>
<dbReference type="InterPro" id="IPR001412">
    <property type="entry name" value="aa-tRNA-synth_I_CS"/>
</dbReference>
<dbReference type="InterPro" id="IPR002305">
    <property type="entry name" value="aa-tRNA-synth_Ic"/>
</dbReference>
<dbReference type="InterPro" id="IPR014729">
    <property type="entry name" value="Rossmann-like_a/b/a_fold"/>
</dbReference>
<dbReference type="InterPro" id="IPR002306">
    <property type="entry name" value="Trp-tRNA-ligase"/>
</dbReference>
<dbReference type="InterPro" id="IPR009068">
    <property type="entry name" value="uS15_NS1_RNA-bd_sf"/>
</dbReference>
<dbReference type="InterPro" id="IPR000738">
    <property type="entry name" value="WHEP-TRS_dom"/>
</dbReference>
<dbReference type="NCBIfam" id="TIGR00233">
    <property type="entry name" value="trpS"/>
    <property type="match status" value="1"/>
</dbReference>
<dbReference type="PANTHER" id="PTHR10055:SF1">
    <property type="entry name" value="TRYPTOPHAN--TRNA LIGASE, CYTOPLASMIC"/>
    <property type="match status" value="1"/>
</dbReference>
<dbReference type="PANTHER" id="PTHR10055">
    <property type="entry name" value="TRYPTOPHANYL-TRNA SYNTHETASE"/>
    <property type="match status" value="1"/>
</dbReference>
<dbReference type="Pfam" id="PF00579">
    <property type="entry name" value="tRNA-synt_1b"/>
    <property type="match status" value="1"/>
</dbReference>
<dbReference type="Pfam" id="PF00458">
    <property type="entry name" value="WHEP-TRS"/>
    <property type="match status" value="1"/>
</dbReference>
<dbReference type="PRINTS" id="PR01039">
    <property type="entry name" value="TRNASYNTHTRP"/>
</dbReference>
<dbReference type="SMART" id="SM00991">
    <property type="entry name" value="WHEP-TRS"/>
    <property type="match status" value="1"/>
</dbReference>
<dbReference type="SUPFAM" id="SSF52374">
    <property type="entry name" value="Nucleotidylyl transferase"/>
    <property type="match status" value="1"/>
</dbReference>
<dbReference type="SUPFAM" id="SSF47060">
    <property type="entry name" value="S15/NS1 RNA-binding domain"/>
    <property type="match status" value="1"/>
</dbReference>
<dbReference type="PROSITE" id="PS00178">
    <property type="entry name" value="AA_TRNA_LIGASE_I"/>
    <property type="match status" value="1"/>
</dbReference>
<dbReference type="PROSITE" id="PS00762">
    <property type="entry name" value="WHEP_TRS_1"/>
    <property type="match status" value="1"/>
</dbReference>
<dbReference type="PROSITE" id="PS51185">
    <property type="entry name" value="WHEP_TRS_2"/>
    <property type="match status" value="1"/>
</dbReference>
<feature type="chain" id="PRO_0000136739" description="Tryptophan--tRNA ligase, cytoplasmic">
    <location>
        <begin position="1"/>
        <end position="481"/>
    </location>
</feature>
<feature type="chain" id="PRO_0000386463" description="T1-TrpRS" evidence="1">
    <location>
        <begin position="75"/>
        <end position="481"/>
    </location>
</feature>
<feature type="chain" id="PRO_0000386464" description="T2-TrpRS" evidence="1">
    <location>
        <begin position="98"/>
        <end position="481"/>
    </location>
</feature>
<feature type="domain" description="WHEP-TRS" evidence="2">
    <location>
        <begin position="12"/>
        <end position="68"/>
    </location>
</feature>
<feature type="short sequence motif" description="'HIGH' region">
    <location>
        <begin position="168"/>
        <end position="177"/>
    </location>
</feature>
<feature type="short sequence motif" description="'KMSKS' region">
    <location>
        <begin position="353"/>
        <end position="357"/>
    </location>
</feature>
<feature type="modified residue" description="N6-succinyllysine" evidence="8">
    <location>
        <position position="158"/>
    </location>
</feature>
<feature type="modified residue" description="Phosphoserine" evidence="1">
    <location>
        <position position="355"/>
    </location>
</feature>
<feature type="splice variant" id="VSP_006313" description="In isoform 2." evidence="4 5">
    <location>
        <begin position="476"/>
        <end position="481"/>
    </location>
</feature>
<feature type="sequence conflict" description="In Ref. 3; AAH03450." evidence="6" ref="3">
    <original>M</original>
    <variation>V</variation>
    <location>
        <position position="52"/>
    </location>
</feature>
<feature type="sequence conflict" description="In Ref. 3; AAH46232." evidence="6" ref="3">
    <original>V</original>
    <variation>A</variation>
    <location>
        <position position="94"/>
    </location>
</feature>
<feature type="sequence conflict" description="In Ref. 1; CAA49347/CAA49348." evidence="6" ref="1">
    <original>F</original>
    <variation>P</variation>
    <location>
        <position position="111"/>
    </location>
</feature>
<feature type="sequence conflict" description="In Ref. 1; CAA49347/CAA49348." evidence="6" ref="1">
    <original>Q</original>
    <variation>E</variation>
    <location>
        <position position="188"/>
    </location>
</feature>
<feature type="sequence conflict" description="In Ref. 1; CAA49347/CAA49348." evidence="6" ref="1">
    <original>I</original>
    <variation>S</variation>
    <location>
        <position position="282"/>
    </location>
</feature>
<protein>
    <recommendedName>
        <fullName evidence="1">Tryptophan--tRNA ligase, cytoplasmic</fullName>
        <ecNumber evidence="1">6.1.1.2</ecNumber>
    </recommendedName>
    <alternativeName>
        <fullName>Tryptophanyl-tRNA synthetase</fullName>
        <shortName>TrpRS</shortName>
    </alternativeName>
    <component>
        <recommendedName>
            <fullName>T1-TrpRS</fullName>
        </recommendedName>
    </component>
    <component>
        <recommendedName>
            <fullName>T2-TrpRS</fullName>
        </recommendedName>
    </component>
</protein>
<evidence type="ECO:0000250" key="1">
    <source>
        <dbReference type="UniProtKB" id="P23381"/>
    </source>
</evidence>
<evidence type="ECO:0000255" key="2">
    <source>
        <dbReference type="PROSITE-ProRule" id="PRU00531"/>
    </source>
</evidence>
<evidence type="ECO:0000269" key="3">
    <source>
    </source>
</evidence>
<evidence type="ECO:0000303" key="4">
    <source>
    </source>
</evidence>
<evidence type="ECO:0000303" key="5">
    <source>
    </source>
</evidence>
<evidence type="ECO:0000305" key="6"/>
<evidence type="ECO:0000312" key="7">
    <source>
        <dbReference type="MGI" id="MGI:104630"/>
    </source>
</evidence>
<evidence type="ECO:0007744" key="8">
    <source>
    </source>
</evidence>
<reference key="1">
    <citation type="journal article" date="1994" name="J. Mol. Biol.">
        <title>An alternative splicing modifies the C-terminal end of tryptophanyl-tRNA synthetase in murine embryonic stem cells.</title>
        <authorList>
            <person name="Pajot B."/>
            <person name="Sarger C."/>
            <person name="Bonnet J."/>
            <person name="Garret M."/>
        </authorList>
    </citation>
    <scope>NUCLEOTIDE SEQUENCE [GENOMIC DNA]</scope>
    <scope>ALTERNATIVE SPLICING</scope>
</reference>
<reference key="2">
    <citation type="journal article" date="2005" name="Science">
        <title>The transcriptional landscape of the mammalian genome.</title>
        <authorList>
            <person name="Carninci P."/>
            <person name="Kasukawa T."/>
            <person name="Katayama S."/>
            <person name="Gough J."/>
            <person name="Frith M.C."/>
            <person name="Maeda N."/>
            <person name="Oyama R."/>
            <person name="Ravasi T."/>
            <person name="Lenhard B."/>
            <person name="Wells C."/>
            <person name="Kodzius R."/>
            <person name="Shimokawa K."/>
            <person name="Bajic V.B."/>
            <person name="Brenner S.E."/>
            <person name="Batalov S."/>
            <person name="Forrest A.R."/>
            <person name="Zavolan M."/>
            <person name="Davis M.J."/>
            <person name="Wilming L.G."/>
            <person name="Aidinis V."/>
            <person name="Allen J.E."/>
            <person name="Ambesi-Impiombato A."/>
            <person name="Apweiler R."/>
            <person name="Aturaliya R.N."/>
            <person name="Bailey T.L."/>
            <person name="Bansal M."/>
            <person name="Baxter L."/>
            <person name="Beisel K.W."/>
            <person name="Bersano T."/>
            <person name="Bono H."/>
            <person name="Chalk A.M."/>
            <person name="Chiu K.P."/>
            <person name="Choudhary V."/>
            <person name="Christoffels A."/>
            <person name="Clutterbuck D.R."/>
            <person name="Crowe M.L."/>
            <person name="Dalla E."/>
            <person name="Dalrymple B.P."/>
            <person name="de Bono B."/>
            <person name="Della Gatta G."/>
            <person name="di Bernardo D."/>
            <person name="Down T."/>
            <person name="Engstrom P."/>
            <person name="Fagiolini M."/>
            <person name="Faulkner G."/>
            <person name="Fletcher C.F."/>
            <person name="Fukushima T."/>
            <person name="Furuno M."/>
            <person name="Futaki S."/>
            <person name="Gariboldi M."/>
            <person name="Georgii-Hemming P."/>
            <person name="Gingeras T.R."/>
            <person name="Gojobori T."/>
            <person name="Green R.E."/>
            <person name="Gustincich S."/>
            <person name="Harbers M."/>
            <person name="Hayashi Y."/>
            <person name="Hensch T.K."/>
            <person name="Hirokawa N."/>
            <person name="Hill D."/>
            <person name="Huminiecki L."/>
            <person name="Iacono M."/>
            <person name="Ikeo K."/>
            <person name="Iwama A."/>
            <person name="Ishikawa T."/>
            <person name="Jakt M."/>
            <person name="Kanapin A."/>
            <person name="Katoh M."/>
            <person name="Kawasawa Y."/>
            <person name="Kelso J."/>
            <person name="Kitamura H."/>
            <person name="Kitano H."/>
            <person name="Kollias G."/>
            <person name="Krishnan S.P."/>
            <person name="Kruger A."/>
            <person name="Kummerfeld S.K."/>
            <person name="Kurochkin I.V."/>
            <person name="Lareau L.F."/>
            <person name="Lazarevic D."/>
            <person name="Lipovich L."/>
            <person name="Liu J."/>
            <person name="Liuni S."/>
            <person name="McWilliam S."/>
            <person name="Madan Babu M."/>
            <person name="Madera M."/>
            <person name="Marchionni L."/>
            <person name="Matsuda H."/>
            <person name="Matsuzawa S."/>
            <person name="Miki H."/>
            <person name="Mignone F."/>
            <person name="Miyake S."/>
            <person name="Morris K."/>
            <person name="Mottagui-Tabar S."/>
            <person name="Mulder N."/>
            <person name="Nakano N."/>
            <person name="Nakauchi H."/>
            <person name="Ng P."/>
            <person name="Nilsson R."/>
            <person name="Nishiguchi S."/>
            <person name="Nishikawa S."/>
            <person name="Nori F."/>
            <person name="Ohara O."/>
            <person name="Okazaki Y."/>
            <person name="Orlando V."/>
            <person name="Pang K.C."/>
            <person name="Pavan W.J."/>
            <person name="Pavesi G."/>
            <person name="Pesole G."/>
            <person name="Petrovsky N."/>
            <person name="Piazza S."/>
            <person name="Reed J."/>
            <person name="Reid J.F."/>
            <person name="Ring B.Z."/>
            <person name="Ringwald M."/>
            <person name="Rost B."/>
            <person name="Ruan Y."/>
            <person name="Salzberg S.L."/>
            <person name="Sandelin A."/>
            <person name="Schneider C."/>
            <person name="Schoenbach C."/>
            <person name="Sekiguchi K."/>
            <person name="Semple C.A."/>
            <person name="Seno S."/>
            <person name="Sessa L."/>
            <person name="Sheng Y."/>
            <person name="Shibata Y."/>
            <person name="Shimada H."/>
            <person name="Shimada K."/>
            <person name="Silva D."/>
            <person name="Sinclair B."/>
            <person name="Sperling S."/>
            <person name="Stupka E."/>
            <person name="Sugiura K."/>
            <person name="Sultana R."/>
            <person name="Takenaka Y."/>
            <person name="Taki K."/>
            <person name="Tammoja K."/>
            <person name="Tan S.L."/>
            <person name="Tang S."/>
            <person name="Taylor M.S."/>
            <person name="Tegner J."/>
            <person name="Teichmann S.A."/>
            <person name="Ueda H.R."/>
            <person name="van Nimwegen E."/>
            <person name="Verardo R."/>
            <person name="Wei C.L."/>
            <person name="Yagi K."/>
            <person name="Yamanishi H."/>
            <person name="Zabarovsky E."/>
            <person name="Zhu S."/>
            <person name="Zimmer A."/>
            <person name="Hide W."/>
            <person name="Bult C."/>
            <person name="Grimmond S.M."/>
            <person name="Teasdale R.D."/>
            <person name="Liu E.T."/>
            <person name="Brusic V."/>
            <person name="Quackenbush J."/>
            <person name="Wahlestedt C."/>
            <person name="Mattick J.S."/>
            <person name="Hume D.A."/>
            <person name="Kai C."/>
            <person name="Sasaki D."/>
            <person name="Tomaru Y."/>
            <person name="Fukuda S."/>
            <person name="Kanamori-Katayama M."/>
            <person name="Suzuki M."/>
            <person name="Aoki J."/>
            <person name="Arakawa T."/>
            <person name="Iida J."/>
            <person name="Imamura K."/>
            <person name="Itoh M."/>
            <person name="Kato T."/>
            <person name="Kawaji H."/>
            <person name="Kawagashira N."/>
            <person name="Kawashima T."/>
            <person name="Kojima M."/>
            <person name="Kondo S."/>
            <person name="Konno H."/>
            <person name="Nakano K."/>
            <person name="Ninomiya N."/>
            <person name="Nishio T."/>
            <person name="Okada M."/>
            <person name="Plessy C."/>
            <person name="Shibata K."/>
            <person name="Shiraki T."/>
            <person name="Suzuki S."/>
            <person name="Tagami M."/>
            <person name="Waki K."/>
            <person name="Watahiki A."/>
            <person name="Okamura-Oho Y."/>
            <person name="Suzuki H."/>
            <person name="Kawai J."/>
            <person name="Hayashizaki Y."/>
        </authorList>
    </citation>
    <scope>NUCLEOTIDE SEQUENCE [LARGE SCALE MRNA] (ISOFORM 2)</scope>
    <source>
        <strain>C57BL/6J</strain>
        <tissue>Lung</tissue>
    </source>
</reference>
<reference key="3">
    <citation type="journal article" date="2004" name="Genome Res.">
        <title>The status, quality, and expansion of the NIH full-length cDNA project: the Mammalian Gene Collection (MGC).</title>
        <authorList>
            <consortium name="The MGC Project Team"/>
        </authorList>
    </citation>
    <scope>NUCLEOTIDE SEQUENCE [LARGE SCALE MRNA] (ISOFORMS 1 AND 2)</scope>
    <source>
        <strain>C57BL/6J</strain>
        <strain>NMRI</strain>
        <tissue>Brain</tissue>
        <tissue>Mammary tumor</tissue>
    </source>
</reference>
<reference key="4">
    <citation type="submission" date="2009-01" db="UniProtKB">
        <authorList>
            <person name="Lubec G."/>
            <person name="Sunyer B."/>
            <person name="Chen W.-Q."/>
        </authorList>
    </citation>
    <scope>PROTEIN SEQUENCE OF 38-45; 56-63; 84-95; 107-123; 146-166; 186-204; 209-253; 269-299; 331-370; 423-436 AND 437-452</scope>
    <scope>IDENTIFICATION BY MASS SPECTROMETRY</scope>
    <source>
        <strain>OF1</strain>
        <tissue>Hippocampus</tissue>
    </source>
</reference>
<reference key="5">
    <citation type="journal article" date="2010" name="Cell">
        <title>A tissue-specific atlas of mouse protein phosphorylation and expression.</title>
        <authorList>
            <person name="Huttlin E.L."/>
            <person name="Jedrychowski M.P."/>
            <person name="Elias J.E."/>
            <person name="Goswami T."/>
            <person name="Rad R."/>
            <person name="Beausoleil S.A."/>
            <person name="Villen J."/>
            <person name="Haas W."/>
            <person name="Sowa M.E."/>
            <person name="Gygi S.P."/>
        </authorList>
    </citation>
    <scope>IDENTIFICATION BY MASS SPECTROMETRY [LARGE SCALE ANALYSIS]</scope>
    <source>
        <tissue>Brain</tissue>
        <tissue>Brown adipose tissue</tissue>
        <tissue>Heart</tissue>
        <tissue>Kidney</tissue>
        <tissue>Liver</tissue>
        <tissue>Lung</tissue>
        <tissue>Pancreas</tissue>
        <tissue>Spleen</tissue>
        <tissue>Testis</tissue>
    </source>
</reference>
<reference key="6">
    <citation type="journal article" date="2013" name="Mol. Cell">
        <title>SIRT5-mediated lysine desuccinylation impacts diverse metabolic pathways.</title>
        <authorList>
            <person name="Park J."/>
            <person name="Chen Y."/>
            <person name="Tishkoff D.X."/>
            <person name="Peng C."/>
            <person name="Tan M."/>
            <person name="Dai L."/>
            <person name="Xie Z."/>
            <person name="Zhang Y."/>
            <person name="Zwaans B.M."/>
            <person name="Skinner M.E."/>
            <person name="Lombard D.B."/>
            <person name="Zhao Y."/>
        </authorList>
    </citation>
    <scope>SUCCINYLATION [LARGE SCALE ANALYSIS] AT LYS-158</scope>
    <scope>IDENTIFICATION BY MASS SPECTROMETRY [LARGE SCALE ANALYSIS]</scope>
    <source>
        <tissue>Embryonic fibroblast</tissue>
    </source>
</reference>
<accession>P32921</accession>
<accession>Q80ZY4</accession>
<accession>Q99J58</accession>
<accession>Q9DC65</accession>
<organism>
    <name type="scientific">Mus musculus</name>
    <name type="common">Mouse</name>
    <dbReference type="NCBI Taxonomy" id="10090"/>
    <lineage>
        <taxon>Eukaryota</taxon>
        <taxon>Metazoa</taxon>
        <taxon>Chordata</taxon>
        <taxon>Craniata</taxon>
        <taxon>Vertebrata</taxon>
        <taxon>Euteleostomi</taxon>
        <taxon>Mammalia</taxon>
        <taxon>Eutheria</taxon>
        <taxon>Euarchontoglires</taxon>
        <taxon>Glires</taxon>
        <taxon>Rodentia</taxon>
        <taxon>Myomorpha</taxon>
        <taxon>Muroidea</taxon>
        <taxon>Muridae</taxon>
        <taxon>Murinae</taxon>
        <taxon>Mus</taxon>
        <taxon>Mus</taxon>
    </lineage>
</organism>
<name>SYWC_MOUSE</name>
<keyword id="KW-0025">Alternative splicing</keyword>
<keyword id="KW-0030">Aminoacyl-tRNA synthetase</keyword>
<keyword id="KW-0037">Angiogenesis</keyword>
<keyword id="KW-0067">ATP-binding</keyword>
<keyword id="KW-0963">Cytoplasm</keyword>
<keyword id="KW-0903">Direct protein sequencing</keyword>
<keyword id="KW-0436">Ligase</keyword>
<keyword id="KW-0547">Nucleotide-binding</keyword>
<keyword id="KW-0597">Phosphoprotein</keyword>
<keyword id="KW-0648">Protein biosynthesis</keyword>
<keyword id="KW-1185">Reference proteome</keyword>
<gene>
    <name evidence="7" type="primary">Wars1</name>
    <name type="synonym">Wars</name>
    <name type="synonym">Wrs</name>
</gene>
<sequence>MADMPSGESCTSPLELFNSIATQGELVRSLKAGNAPKDEIDSAVKMLLSLKMSYKAAMGEEYKAGCPPGNPTAGRNCDSDATKASEDFVDPWTVRTSSAKGIDYDKLIVQFGSSKIDKELINRIERATGQRPHRFLRRGIFFSHRDMNQILDAYENKKPFYLYTGRGPSSEAMHLGHLVPFIFTKWLQDVFNVPLVIQMSDDEKYLWKDLTLEQAYSYTVENAKDIIACGFDINKTFIFSDLEYMGQSPGFYRNVVKIQKHVTFNQVKGIFGFTDSDCIGKISFPAVQAAPSFSNSFPKIFRDRTDIQCLIPCAIDQDPYFRMTRDVAPRIGHPKPALLHSTFFPALQGAQTKMSASDPNSSIFLTDTAKQIKSKVNKHAFSGGRDTVEEHRQFGGNCEVDVSFMYLTFFLEDDDRLEQIRKDYTSGAMLTGELKKTLIDVLQPLIAEHQARRKAVTEETVKEFMTPRQLSFHFQCFCFDT</sequence>